<accession>Q73LJ8</accession>
<name>RUVC_TREDE</name>
<sequence>MGILKAASSKKNLRPCVIGIDPGLANTGYGIISFSNNRFECIEYGSISTEPHLLQGERLLKIFDKVSELIEKYRPKEAGIETLYFAKNATSAMSVSEARGVVLLALAQGGVRVGEYAPNSIKKAVTGIAQAEKRQVQEAVKLILGLKEIPRPDHAADALAAAITKINLGDVGEVRAYV</sequence>
<protein>
    <recommendedName>
        <fullName evidence="1">Crossover junction endodeoxyribonuclease RuvC</fullName>
        <ecNumber evidence="1">3.1.21.10</ecNumber>
    </recommendedName>
    <alternativeName>
        <fullName evidence="1">Holliday junction nuclease RuvC</fullName>
    </alternativeName>
    <alternativeName>
        <fullName evidence="1">Holliday junction resolvase RuvC</fullName>
    </alternativeName>
</protein>
<proteinExistence type="inferred from homology"/>
<evidence type="ECO:0000255" key="1">
    <source>
        <dbReference type="HAMAP-Rule" id="MF_00034"/>
    </source>
</evidence>
<comment type="function">
    <text evidence="1">The RuvA-RuvB-RuvC complex processes Holliday junction (HJ) DNA during genetic recombination and DNA repair. Endonuclease that resolves HJ intermediates. Cleaves cruciform DNA by making single-stranded nicks across the HJ at symmetrical positions within the homologous arms, yielding a 5'-phosphate and a 3'-hydroxyl group; requires a central core of homology in the junction. The consensus cleavage sequence is 5'-(A/T)TT(C/G)-3'. Cleavage occurs on the 3'-side of the TT dinucleotide at the point of strand exchange. HJ branch migration catalyzed by RuvA-RuvB allows RuvC to scan DNA until it finds its consensus sequence, where it cleaves and resolves the cruciform DNA.</text>
</comment>
<comment type="catalytic activity">
    <reaction evidence="1">
        <text>Endonucleolytic cleavage at a junction such as a reciprocal single-stranded crossover between two homologous DNA duplexes (Holliday junction).</text>
        <dbReference type="EC" id="3.1.21.10"/>
    </reaction>
</comment>
<comment type="cofactor">
    <cofactor evidence="1">
        <name>Mg(2+)</name>
        <dbReference type="ChEBI" id="CHEBI:18420"/>
    </cofactor>
    <text evidence="1">Binds 2 Mg(2+) ion per subunit.</text>
</comment>
<comment type="subunit">
    <text evidence="1">Homodimer which binds Holliday junction (HJ) DNA. The HJ becomes 2-fold symmetrical on binding to RuvC with unstacked arms; it has a different conformation from HJ DNA in complex with RuvA. In the full resolvosome a probable DNA-RuvA(4)-RuvB(12)-RuvC(2) complex forms which resolves the HJ.</text>
</comment>
<comment type="subcellular location">
    <subcellularLocation>
        <location evidence="1">Cytoplasm</location>
    </subcellularLocation>
</comment>
<comment type="similarity">
    <text evidence="1">Belongs to the RuvC family.</text>
</comment>
<keyword id="KW-0963">Cytoplasm</keyword>
<keyword id="KW-0227">DNA damage</keyword>
<keyword id="KW-0233">DNA recombination</keyword>
<keyword id="KW-0234">DNA repair</keyword>
<keyword id="KW-0238">DNA-binding</keyword>
<keyword id="KW-0255">Endonuclease</keyword>
<keyword id="KW-0378">Hydrolase</keyword>
<keyword id="KW-0460">Magnesium</keyword>
<keyword id="KW-0479">Metal-binding</keyword>
<keyword id="KW-0540">Nuclease</keyword>
<keyword id="KW-1185">Reference proteome</keyword>
<organism>
    <name type="scientific">Treponema denticola (strain ATCC 35405 / DSM 14222 / CIP 103919 / JCM 8153 / KCTC 15104)</name>
    <dbReference type="NCBI Taxonomy" id="243275"/>
    <lineage>
        <taxon>Bacteria</taxon>
        <taxon>Pseudomonadati</taxon>
        <taxon>Spirochaetota</taxon>
        <taxon>Spirochaetia</taxon>
        <taxon>Spirochaetales</taxon>
        <taxon>Treponemataceae</taxon>
        <taxon>Treponema</taxon>
    </lineage>
</organism>
<reference key="1">
    <citation type="journal article" date="2004" name="Proc. Natl. Acad. Sci. U.S.A.">
        <title>Comparison of the genome of the oral pathogen Treponema denticola with other spirochete genomes.</title>
        <authorList>
            <person name="Seshadri R."/>
            <person name="Myers G.S.A."/>
            <person name="Tettelin H."/>
            <person name="Eisen J.A."/>
            <person name="Heidelberg J.F."/>
            <person name="Dodson R.J."/>
            <person name="Davidsen T.M."/>
            <person name="DeBoy R.T."/>
            <person name="Fouts D.E."/>
            <person name="Haft D.H."/>
            <person name="Selengut J."/>
            <person name="Ren Q."/>
            <person name="Brinkac L.M."/>
            <person name="Madupu R."/>
            <person name="Kolonay J.F."/>
            <person name="Durkin S.A."/>
            <person name="Daugherty S.C."/>
            <person name="Shetty J."/>
            <person name="Shvartsbeyn A."/>
            <person name="Gebregeorgis E."/>
            <person name="Geer K."/>
            <person name="Tsegaye G."/>
            <person name="Malek J.A."/>
            <person name="Ayodeji B."/>
            <person name="Shatsman S."/>
            <person name="McLeod M.P."/>
            <person name="Smajs D."/>
            <person name="Howell J.K."/>
            <person name="Pal S."/>
            <person name="Amin A."/>
            <person name="Vashisth P."/>
            <person name="McNeill T.Z."/>
            <person name="Xiang Q."/>
            <person name="Sodergren E."/>
            <person name="Baca E."/>
            <person name="Weinstock G.M."/>
            <person name="Norris S.J."/>
            <person name="Fraser C.M."/>
            <person name="Paulsen I.T."/>
        </authorList>
    </citation>
    <scope>NUCLEOTIDE SEQUENCE [LARGE SCALE GENOMIC DNA]</scope>
    <source>
        <strain>ATCC 35405 / DSM 14222 / CIP 103919 / JCM 8153 / KCTC 15104</strain>
    </source>
</reference>
<feature type="chain" id="PRO_0000225186" description="Crossover junction endodeoxyribonuclease RuvC">
    <location>
        <begin position="1"/>
        <end position="178"/>
    </location>
</feature>
<feature type="active site" evidence="1">
    <location>
        <position position="21"/>
    </location>
</feature>
<feature type="active site" evidence="1">
    <location>
        <position position="81"/>
    </location>
</feature>
<feature type="active site" evidence="1">
    <location>
        <position position="154"/>
    </location>
</feature>
<feature type="binding site" evidence="1">
    <location>
        <position position="21"/>
    </location>
    <ligand>
        <name>Mg(2+)</name>
        <dbReference type="ChEBI" id="CHEBI:18420"/>
        <label>1</label>
    </ligand>
</feature>
<feature type="binding site" evidence="1">
    <location>
        <position position="81"/>
    </location>
    <ligand>
        <name>Mg(2+)</name>
        <dbReference type="ChEBI" id="CHEBI:18420"/>
        <label>2</label>
    </ligand>
</feature>
<feature type="binding site" evidence="1">
    <location>
        <position position="154"/>
    </location>
    <ligand>
        <name>Mg(2+)</name>
        <dbReference type="ChEBI" id="CHEBI:18420"/>
        <label>1</label>
    </ligand>
</feature>
<gene>
    <name evidence="1" type="primary">ruvC</name>
    <name type="ordered locus">TDE_1864</name>
</gene>
<dbReference type="EC" id="3.1.21.10" evidence="1"/>
<dbReference type="EMBL" id="AE017226">
    <property type="protein sequence ID" value="AAS12379.1"/>
    <property type="molecule type" value="Genomic_DNA"/>
</dbReference>
<dbReference type="RefSeq" id="NP_972468.1">
    <property type="nucleotide sequence ID" value="NC_002967.9"/>
</dbReference>
<dbReference type="RefSeq" id="WP_002679556.1">
    <property type="nucleotide sequence ID" value="NC_002967.9"/>
</dbReference>
<dbReference type="SMR" id="Q73LJ8"/>
<dbReference type="STRING" id="243275.TDE_1864"/>
<dbReference type="PaxDb" id="243275-TDE_1864"/>
<dbReference type="GeneID" id="2740053"/>
<dbReference type="KEGG" id="tde:TDE_1864"/>
<dbReference type="PATRIC" id="fig|243275.7.peg.1769"/>
<dbReference type="eggNOG" id="COG0817">
    <property type="taxonomic scope" value="Bacteria"/>
</dbReference>
<dbReference type="HOGENOM" id="CLU_091257_3_1_12"/>
<dbReference type="OrthoDB" id="9805499at2"/>
<dbReference type="Proteomes" id="UP000008212">
    <property type="component" value="Chromosome"/>
</dbReference>
<dbReference type="GO" id="GO:0005737">
    <property type="term" value="C:cytoplasm"/>
    <property type="evidence" value="ECO:0007669"/>
    <property type="project" value="UniProtKB-SubCell"/>
</dbReference>
<dbReference type="GO" id="GO:0048476">
    <property type="term" value="C:Holliday junction resolvase complex"/>
    <property type="evidence" value="ECO:0007669"/>
    <property type="project" value="UniProtKB-UniRule"/>
</dbReference>
<dbReference type="GO" id="GO:0008821">
    <property type="term" value="F:crossover junction DNA endonuclease activity"/>
    <property type="evidence" value="ECO:0007669"/>
    <property type="project" value="UniProtKB-UniRule"/>
</dbReference>
<dbReference type="GO" id="GO:0003677">
    <property type="term" value="F:DNA binding"/>
    <property type="evidence" value="ECO:0007669"/>
    <property type="project" value="UniProtKB-KW"/>
</dbReference>
<dbReference type="GO" id="GO:0000287">
    <property type="term" value="F:magnesium ion binding"/>
    <property type="evidence" value="ECO:0007669"/>
    <property type="project" value="UniProtKB-UniRule"/>
</dbReference>
<dbReference type="GO" id="GO:0006310">
    <property type="term" value="P:DNA recombination"/>
    <property type="evidence" value="ECO:0007669"/>
    <property type="project" value="UniProtKB-UniRule"/>
</dbReference>
<dbReference type="GO" id="GO:0006281">
    <property type="term" value="P:DNA repair"/>
    <property type="evidence" value="ECO:0007669"/>
    <property type="project" value="UniProtKB-UniRule"/>
</dbReference>
<dbReference type="CDD" id="cd16962">
    <property type="entry name" value="RuvC"/>
    <property type="match status" value="1"/>
</dbReference>
<dbReference type="FunFam" id="3.30.420.10:FF:000002">
    <property type="entry name" value="Crossover junction endodeoxyribonuclease RuvC"/>
    <property type="match status" value="1"/>
</dbReference>
<dbReference type="Gene3D" id="3.30.420.10">
    <property type="entry name" value="Ribonuclease H-like superfamily/Ribonuclease H"/>
    <property type="match status" value="1"/>
</dbReference>
<dbReference type="HAMAP" id="MF_00034">
    <property type="entry name" value="RuvC"/>
    <property type="match status" value="1"/>
</dbReference>
<dbReference type="InterPro" id="IPR012337">
    <property type="entry name" value="RNaseH-like_sf"/>
</dbReference>
<dbReference type="InterPro" id="IPR036397">
    <property type="entry name" value="RNaseH_sf"/>
</dbReference>
<dbReference type="InterPro" id="IPR002176">
    <property type="entry name" value="X-over_junc_endoDNase_RuvC"/>
</dbReference>
<dbReference type="NCBIfam" id="NF000711">
    <property type="entry name" value="PRK00039.2-1"/>
    <property type="match status" value="1"/>
</dbReference>
<dbReference type="NCBIfam" id="TIGR00228">
    <property type="entry name" value="ruvC"/>
    <property type="match status" value="1"/>
</dbReference>
<dbReference type="PANTHER" id="PTHR30194">
    <property type="entry name" value="CROSSOVER JUNCTION ENDODEOXYRIBONUCLEASE RUVC"/>
    <property type="match status" value="1"/>
</dbReference>
<dbReference type="PANTHER" id="PTHR30194:SF3">
    <property type="entry name" value="CROSSOVER JUNCTION ENDODEOXYRIBONUCLEASE RUVC"/>
    <property type="match status" value="1"/>
</dbReference>
<dbReference type="Pfam" id="PF02075">
    <property type="entry name" value="RuvC"/>
    <property type="match status" value="1"/>
</dbReference>
<dbReference type="PRINTS" id="PR00696">
    <property type="entry name" value="RSOLVASERUVC"/>
</dbReference>
<dbReference type="SUPFAM" id="SSF53098">
    <property type="entry name" value="Ribonuclease H-like"/>
    <property type="match status" value="1"/>
</dbReference>